<protein>
    <recommendedName>
        <fullName evidence="1">Putative pre-16S rRNA nuclease</fullName>
        <ecNumber evidence="1">3.1.-.-</ecNumber>
    </recommendedName>
</protein>
<name>YQGF_LACLA</name>
<keyword id="KW-0963">Cytoplasm</keyword>
<keyword id="KW-0378">Hydrolase</keyword>
<keyword id="KW-0540">Nuclease</keyword>
<keyword id="KW-1185">Reference proteome</keyword>
<keyword id="KW-0690">Ribosome biogenesis</keyword>
<dbReference type="EC" id="3.1.-.-" evidence="1"/>
<dbReference type="EMBL" id="AE005176">
    <property type="protein sequence ID" value="AAK04241.1"/>
    <property type="status" value="ALT_INIT"/>
    <property type="molecule type" value="Genomic_DNA"/>
</dbReference>
<dbReference type="PIR" id="G86642">
    <property type="entry name" value="G86642"/>
</dbReference>
<dbReference type="RefSeq" id="NP_266299.1">
    <property type="nucleotide sequence ID" value="NC_002662.1"/>
</dbReference>
<dbReference type="SMR" id="Q9CJ63"/>
<dbReference type="PaxDb" id="272623-L141748"/>
<dbReference type="EnsemblBacteria" id="AAK04241">
    <property type="protein sequence ID" value="AAK04241"/>
    <property type="gene ID" value="L141748"/>
</dbReference>
<dbReference type="KEGG" id="lla:L141748"/>
<dbReference type="PATRIC" id="fig|272623.7.peg.158"/>
<dbReference type="eggNOG" id="COG0816">
    <property type="taxonomic scope" value="Bacteria"/>
</dbReference>
<dbReference type="HOGENOM" id="CLU_098240_2_0_9"/>
<dbReference type="OrthoDB" id="9796140at2"/>
<dbReference type="Proteomes" id="UP000002196">
    <property type="component" value="Chromosome"/>
</dbReference>
<dbReference type="GO" id="GO:0005829">
    <property type="term" value="C:cytosol"/>
    <property type="evidence" value="ECO:0007669"/>
    <property type="project" value="TreeGrafter"/>
</dbReference>
<dbReference type="GO" id="GO:0004518">
    <property type="term" value="F:nuclease activity"/>
    <property type="evidence" value="ECO:0007669"/>
    <property type="project" value="UniProtKB-KW"/>
</dbReference>
<dbReference type="GO" id="GO:0000967">
    <property type="term" value="P:rRNA 5'-end processing"/>
    <property type="evidence" value="ECO:0007669"/>
    <property type="project" value="UniProtKB-UniRule"/>
</dbReference>
<dbReference type="CDD" id="cd16964">
    <property type="entry name" value="YqgF"/>
    <property type="match status" value="1"/>
</dbReference>
<dbReference type="Gene3D" id="3.30.420.140">
    <property type="entry name" value="YqgF/RNase H-like domain"/>
    <property type="match status" value="1"/>
</dbReference>
<dbReference type="HAMAP" id="MF_00651">
    <property type="entry name" value="Nuclease_YqgF"/>
    <property type="match status" value="1"/>
</dbReference>
<dbReference type="InterPro" id="IPR012337">
    <property type="entry name" value="RNaseH-like_sf"/>
</dbReference>
<dbReference type="InterPro" id="IPR005227">
    <property type="entry name" value="YqgF"/>
</dbReference>
<dbReference type="InterPro" id="IPR006641">
    <property type="entry name" value="YqgF/RNaseH-like_dom"/>
</dbReference>
<dbReference type="InterPro" id="IPR037027">
    <property type="entry name" value="YqgF/RNaseH-like_dom_sf"/>
</dbReference>
<dbReference type="NCBIfam" id="TIGR00250">
    <property type="entry name" value="RNAse_H_YqgF"/>
    <property type="match status" value="1"/>
</dbReference>
<dbReference type="PANTHER" id="PTHR33317">
    <property type="entry name" value="POLYNUCLEOTIDYL TRANSFERASE, RIBONUCLEASE H-LIKE SUPERFAMILY PROTEIN"/>
    <property type="match status" value="1"/>
</dbReference>
<dbReference type="PANTHER" id="PTHR33317:SF4">
    <property type="entry name" value="POLYNUCLEOTIDYL TRANSFERASE, RIBONUCLEASE H-LIKE SUPERFAMILY PROTEIN"/>
    <property type="match status" value="1"/>
</dbReference>
<dbReference type="Pfam" id="PF03652">
    <property type="entry name" value="RuvX"/>
    <property type="match status" value="1"/>
</dbReference>
<dbReference type="SMART" id="SM00732">
    <property type="entry name" value="YqgFc"/>
    <property type="match status" value="1"/>
</dbReference>
<dbReference type="SUPFAM" id="SSF53098">
    <property type="entry name" value="Ribonuclease H-like"/>
    <property type="match status" value="1"/>
</dbReference>
<comment type="function">
    <text evidence="1">Could be a nuclease involved in processing of the 5'-end of pre-16S rRNA.</text>
</comment>
<comment type="subcellular location">
    <subcellularLocation>
        <location evidence="1">Cytoplasm</location>
    </subcellularLocation>
</comment>
<comment type="similarity">
    <text evidence="1">Belongs to the YqgF nuclease family.</text>
</comment>
<comment type="sequence caution" evidence="2">
    <conflict type="erroneous initiation">
        <sequence resource="EMBL-CDS" id="AAK04241"/>
    </conflict>
    <text>Truncated N-terminus.</text>
</comment>
<evidence type="ECO:0000255" key="1">
    <source>
        <dbReference type="HAMAP-Rule" id="MF_00651"/>
    </source>
</evidence>
<evidence type="ECO:0000305" key="2"/>
<feature type="chain" id="PRO_0000172078" description="Putative pre-16S rRNA nuclease">
    <location>
        <begin position="1"/>
        <end position="143"/>
    </location>
</feature>
<accession>Q9CJ63</accession>
<proteinExistence type="inferred from homology"/>
<reference key="1">
    <citation type="journal article" date="2001" name="Genome Res.">
        <title>The complete genome sequence of the lactic acid bacterium Lactococcus lactis ssp. lactis IL1403.</title>
        <authorList>
            <person name="Bolotin A."/>
            <person name="Wincker P."/>
            <person name="Mauger S."/>
            <person name="Jaillon O."/>
            <person name="Malarme K."/>
            <person name="Weissenbach J."/>
            <person name="Ehrlich S.D."/>
            <person name="Sorokin A."/>
        </authorList>
    </citation>
    <scope>NUCLEOTIDE SEQUENCE [LARGE SCALE GENOMIC DNA]</scope>
    <source>
        <strain>IL1403</strain>
    </source>
</reference>
<gene>
    <name type="primary">ybeB</name>
    <name type="ordered locus">LL0143</name>
    <name type="ORF">L141748</name>
</gene>
<organism>
    <name type="scientific">Lactococcus lactis subsp. lactis (strain IL1403)</name>
    <name type="common">Streptococcus lactis</name>
    <dbReference type="NCBI Taxonomy" id="272623"/>
    <lineage>
        <taxon>Bacteria</taxon>
        <taxon>Bacillati</taxon>
        <taxon>Bacillota</taxon>
        <taxon>Bacilli</taxon>
        <taxon>Lactobacillales</taxon>
        <taxon>Streptococcaceae</taxon>
        <taxon>Lactococcus</taxon>
    </lineage>
</organism>
<sequence>MFARILGLDVGTKTVGVSVSDLLGMTAQPVETIKIDSEAGELGFERLGVLIKEYKPEKVVLGLPKHMNGDEGIRAEASRDYGTKLANEFGLEVAYQDERLTTAQAEKVLIDGGVRRKERKKSIDKLAAVLILQNYLDAHALKL</sequence>